<accession>A9N5J7</accession>
<keyword id="KW-0067">ATP-binding</keyword>
<keyword id="KW-0418">Kinase</keyword>
<keyword id="KW-0547">Nucleotide-binding</keyword>
<keyword id="KW-0808">Transferase</keyword>
<gene>
    <name evidence="1" type="primary">thiK</name>
    <name type="ordered locus">SPAB_02314</name>
</gene>
<feature type="chain" id="PRO_1000088028" description="Thiamine kinase">
    <location>
        <begin position="1"/>
        <end position="274"/>
    </location>
</feature>
<evidence type="ECO:0000255" key="1">
    <source>
        <dbReference type="HAMAP-Rule" id="MF_01604"/>
    </source>
</evidence>
<comment type="function">
    <text evidence="1">Catalyzes the ATP-dependent phosphorylation of thiamine to thiamine phosphate. Is involved in thiamine salvage.</text>
</comment>
<comment type="catalytic activity">
    <reaction evidence="1">
        <text>thiamine + ATP = thiamine phosphate + ADP + H(+)</text>
        <dbReference type="Rhea" id="RHEA:12012"/>
        <dbReference type="ChEBI" id="CHEBI:15378"/>
        <dbReference type="ChEBI" id="CHEBI:18385"/>
        <dbReference type="ChEBI" id="CHEBI:30616"/>
        <dbReference type="ChEBI" id="CHEBI:37575"/>
        <dbReference type="ChEBI" id="CHEBI:456216"/>
        <dbReference type="EC" id="2.7.1.89"/>
    </reaction>
    <physiologicalReaction direction="left-to-right" evidence="1">
        <dbReference type="Rhea" id="RHEA:12013"/>
    </physiologicalReaction>
</comment>
<comment type="pathway">
    <text evidence="1">Cofactor biosynthesis; thiamine diphosphate biosynthesis; thiamine phosphate from thiamine: step 1/1.</text>
</comment>
<comment type="similarity">
    <text evidence="1">Belongs to the thiamine kinase family.</text>
</comment>
<organism>
    <name type="scientific">Salmonella paratyphi B (strain ATCC BAA-1250 / SPB7)</name>
    <dbReference type="NCBI Taxonomy" id="1016998"/>
    <lineage>
        <taxon>Bacteria</taxon>
        <taxon>Pseudomonadati</taxon>
        <taxon>Pseudomonadota</taxon>
        <taxon>Gammaproteobacteria</taxon>
        <taxon>Enterobacterales</taxon>
        <taxon>Enterobacteriaceae</taxon>
        <taxon>Salmonella</taxon>
    </lineage>
</organism>
<name>THIK_SALPB</name>
<sequence>MRSNNNNPLTRDEILSRYFPQYRPAVAASQGLSGGSCIIAHDTHRIVLRRHHDPDAPPAHFLRHHRALSQLPASLAPRALFYTPGWMAVEYLHGVVNSALPDADELAALLYHLHQQPRFGWRIALSPLLAQYWSCCDPARRTPFWLRRLKQLQKNGEPRPLRLAPLHMDVHGDNIVLTSAGLRLIDWEYAGDGDIALELAAVWVEDERQHRQLANAYAACARIDARQLWRQIRLWHPWVIMLKAGWFEYRWRQTGEQQFIRLADETWRQLRMKG</sequence>
<protein>
    <recommendedName>
        <fullName evidence="1">Thiamine kinase</fullName>
        <ecNumber evidence="1">2.7.1.89</ecNumber>
    </recommendedName>
</protein>
<dbReference type="EC" id="2.7.1.89" evidence="1"/>
<dbReference type="EMBL" id="CP000886">
    <property type="protein sequence ID" value="ABX67697.1"/>
    <property type="molecule type" value="Genomic_DNA"/>
</dbReference>
<dbReference type="RefSeq" id="WP_001257323.1">
    <property type="nucleotide sequence ID" value="NC_010102.1"/>
</dbReference>
<dbReference type="SMR" id="A9N5J7"/>
<dbReference type="KEGG" id="spq:SPAB_02314"/>
<dbReference type="PATRIC" id="fig|1016998.12.peg.2189"/>
<dbReference type="HOGENOM" id="CLU_055115_2_1_6"/>
<dbReference type="BioCyc" id="SENT1016998:SPAB_RS09410-MONOMER"/>
<dbReference type="UniPathway" id="UPA00060">
    <property type="reaction ID" value="UER00596"/>
</dbReference>
<dbReference type="Proteomes" id="UP000008556">
    <property type="component" value="Chromosome"/>
</dbReference>
<dbReference type="GO" id="GO:0005524">
    <property type="term" value="F:ATP binding"/>
    <property type="evidence" value="ECO:0007669"/>
    <property type="project" value="UniProtKB-KW"/>
</dbReference>
<dbReference type="GO" id="GO:0019165">
    <property type="term" value="F:thiamine kinase activity"/>
    <property type="evidence" value="ECO:0007669"/>
    <property type="project" value="UniProtKB-UniRule"/>
</dbReference>
<dbReference type="GO" id="GO:0009229">
    <property type="term" value="P:thiamine diphosphate biosynthetic process"/>
    <property type="evidence" value="ECO:0007669"/>
    <property type="project" value="UniProtKB-UniRule"/>
</dbReference>
<dbReference type="GO" id="GO:0006772">
    <property type="term" value="P:thiamine metabolic process"/>
    <property type="evidence" value="ECO:0007669"/>
    <property type="project" value="InterPro"/>
</dbReference>
<dbReference type="Gene3D" id="3.90.1200.10">
    <property type="match status" value="1"/>
</dbReference>
<dbReference type="HAMAP" id="MF_01604">
    <property type="entry name" value="Thiamine_kinase"/>
    <property type="match status" value="1"/>
</dbReference>
<dbReference type="InterPro" id="IPR002575">
    <property type="entry name" value="Aminoglycoside_PTrfase"/>
</dbReference>
<dbReference type="InterPro" id="IPR011009">
    <property type="entry name" value="Kinase-like_dom_sf"/>
</dbReference>
<dbReference type="InterPro" id="IPR014093">
    <property type="entry name" value="Thiamine_kinase"/>
</dbReference>
<dbReference type="NCBIfam" id="NF007620">
    <property type="entry name" value="PRK10271.1"/>
    <property type="match status" value="1"/>
</dbReference>
<dbReference type="NCBIfam" id="TIGR02721">
    <property type="entry name" value="ycfN_thiK"/>
    <property type="match status" value="1"/>
</dbReference>
<dbReference type="Pfam" id="PF01636">
    <property type="entry name" value="APH"/>
    <property type="match status" value="1"/>
</dbReference>
<dbReference type="SUPFAM" id="SSF56112">
    <property type="entry name" value="Protein kinase-like (PK-like)"/>
    <property type="match status" value="1"/>
</dbReference>
<proteinExistence type="inferred from homology"/>
<reference key="1">
    <citation type="submission" date="2007-11" db="EMBL/GenBank/DDBJ databases">
        <authorList>
            <consortium name="The Salmonella enterica serovar Paratyphi B Genome Sequencing Project"/>
            <person name="McClelland M."/>
            <person name="Sanderson E.K."/>
            <person name="Porwollik S."/>
            <person name="Spieth J."/>
            <person name="Clifton W.S."/>
            <person name="Fulton R."/>
            <person name="Cordes M."/>
            <person name="Wollam A."/>
            <person name="Shah N."/>
            <person name="Pepin K."/>
            <person name="Bhonagiri V."/>
            <person name="Nash W."/>
            <person name="Johnson M."/>
            <person name="Thiruvilangam P."/>
            <person name="Wilson R."/>
        </authorList>
    </citation>
    <scope>NUCLEOTIDE SEQUENCE [LARGE SCALE GENOMIC DNA]</scope>
    <source>
        <strain>ATCC BAA-1250 / SPB7</strain>
    </source>
</reference>